<evidence type="ECO:0000250" key="1"/>
<evidence type="ECO:0000255" key="2">
    <source>
        <dbReference type="PROSITE-ProRule" id="PRU00176"/>
    </source>
</evidence>
<evidence type="ECO:0000256" key="3">
    <source>
        <dbReference type="SAM" id="MobiDB-lite"/>
    </source>
</evidence>
<evidence type="ECO:0000269" key="4">
    <source>
    </source>
</evidence>
<evidence type="ECO:0000303" key="5">
    <source>
    </source>
</evidence>
<evidence type="ECO:0000303" key="6">
    <source>
    </source>
</evidence>
<evidence type="ECO:0000305" key="7"/>
<evidence type="ECO:0007829" key="8">
    <source>
        <dbReference type="PDB" id="2DGQ"/>
    </source>
</evidence>
<keyword id="KW-0002">3D-structure</keyword>
<keyword id="KW-0025">Alternative splicing</keyword>
<keyword id="KW-0963">Cytoplasm</keyword>
<keyword id="KW-0507">mRNA processing</keyword>
<keyword id="KW-0539">Nucleus</keyword>
<keyword id="KW-1267">Proteomics identification</keyword>
<keyword id="KW-1185">Reference proteome</keyword>
<keyword id="KW-0677">Repeat</keyword>
<keyword id="KW-0694">RNA-binding</keyword>
<accession>Q96J87</accession>
<accession>B4DG28</accession>
<accession>B4DJB6</accession>
<accession>Q6PII4</accession>
<accession>Q6ZNJ7</accession>
<accession>Q8N607</accession>
<reference key="1">
    <citation type="journal article" date="2000" name="J. Biol. Chem.">
        <title>A family of human RNA-binding proteins related to the Drosophila Bruno translational regulator.</title>
        <authorList>
            <person name="Good P.J."/>
            <person name="Chen Q."/>
            <person name="Warner S.J."/>
            <person name="Herring D.C."/>
        </authorList>
    </citation>
    <scope>NUCLEOTIDE SEQUENCE [MRNA] (ISOFORM 1)</scope>
    <source>
        <tissue>Frontal cortex</tissue>
    </source>
</reference>
<reference key="2">
    <citation type="submission" date="2001-09" db="EMBL/GenBank/DDBJ databases">
        <title>Characterization of the ELAV/BRUNO/TIA superfamily.</title>
        <authorList>
            <person name="Bozzali M."/>
            <person name="Quattrone S."/>
            <person name="Quattrone A."/>
        </authorList>
    </citation>
    <scope>NUCLEOTIDE SEQUENCE [MRNA] (ISOFORM 1)</scope>
</reference>
<reference key="3">
    <citation type="journal article" date="2004" name="Nat. Genet.">
        <title>Complete sequencing and characterization of 21,243 full-length human cDNAs.</title>
        <authorList>
            <person name="Ota T."/>
            <person name="Suzuki Y."/>
            <person name="Nishikawa T."/>
            <person name="Otsuki T."/>
            <person name="Sugiyama T."/>
            <person name="Irie R."/>
            <person name="Wakamatsu A."/>
            <person name="Hayashi K."/>
            <person name="Sato H."/>
            <person name="Nagai K."/>
            <person name="Kimura K."/>
            <person name="Makita H."/>
            <person name="Sekine M."/>
            <person name="Obayashi M."/>
            <person name="Nishi T."/>
            <person name="Shibahara T."/>
            <person name="Tanaka T."/>
            <person name="Ishii S."/>
            <person name="Yamamoto J."/>
            <person name="Saito K."/>
            <person name="Kawai Y."/>
            <person name="Isono Y."/>
            <person name="Nakamura Y."/>
            <person name="Nagahari K."/>
            <person name="Murakami K."/>
            <person name="Yasuda T."/>
            <person name="Iwayanagi T."/>
            <person name="Wagatsuma M."/>
            <person name="Shiratori A."/>
            <person name="Sudo H."/>
            <person name="Hosoiri T."/>
            <person name="Kaku Y."/>
            <person name="Kodaira H."/>
            <person name="Kondo H."/>
            <person name="Sugawara M."/>
            <person name="Takahashi M."/>
            <person name="Kanda K."/>
            <person name="Yokoi T."/>
            <person name="Furuya T."/>
            <person name="Kikkawa E."/>
            <person name="Omura Y."/>
            <person name="Abe K."/>
            <person name="Kamihara K."/>
            <person name="Katsuta N."/>
            <person name="Sato K."/>
            <person name="Tanikawa M."/>
            <person name="Yamazaki M."/>
            <person name="Ninomiya K."/>
            <person name="Ishibashi T."/>
            <person name="Yamashita H."/>
            <person name="Murakawa K."/>
            <person name="Fujimori K."/>
            <person name="Tanai H."/>
            <person name="Kimata M."/>
            <person name="Watanabe M."/>
            <person name="Hiraoka S."/>
            <person name="Chiba Y."/>
            <person name="Ishida S."/>
            <person name="Ono Y."/>
            <person name="Takiguchi S."/>
            <person name="Watanabe S."/>
            <person name="Yosida M."/>
            <person name="Hotuta T."/>
            <person name="Kusano J."/>
            <person name="Kanehori K."/>
            <person name="Takahashi-Fujii A."/>
            <person name="Hara H."/>
            <person name="Tanase T.-O."/>
            <person name="Nomura Y."/>
            <person name="Togiya S."/>
            <person name="Komai F."/>
            <person name="Hara R."/>
            <person name="Takeuchi K."/>
            <person name="Arita M."/>
            <person name="Imose N."/>
            <person name="Musashino K."/>
            <person name="Yuuki H."/>
            <person name="Oshima A."/>
            <person name="Sasaki N."/>
            <person name="Aotsuka S."/>
            <person name="Yoshikawa Y."/>
            <person name="Matsunawa H."/>
            <person name="Ichihara T."/>
            <person name="Shiohata N."/>
            <person name="Sano S."/>
            <person name="Moriya S."/>
            <person name="Momiyama H."/>
            <person name="Satoh N."/>
            <person name="Takami S."/>
            <person name="Terashima Y."/>
            <person name="Suzuki O."/>
            <person name="Nakagawa S."/>
            <person name="Senoh A."/>
            <person name="Mizoguchi H."/>
            <person name="Goto Y."/>
            <person name="Shimizu F."/>
            <person name="Wakebe H."/>
            <person name="Hishigaki H."/>
            <person name="Watanabe T."/>
            <person name="Sugiyama A."/>
            <person name="Takemoto M."/>
            <person name="Kawakami B."/>
            <person name="Yamazaki M."/>
            <person name="Watanabe K."/>
            <person name="Kumagai A."/>
            <person name="Itakura S."/>
            <person name="Fukuzumi Y."/>
            <person name="Fujimori Y."/>
            <person name="Komiyama M."/>
            <person name="Tashiro H."/>
            <person name="Tanigami A."/>
            <person name="Fujiwara T."/>
            <person name="Ono T."/>
            <person name="Yamada K."/>
            <person name="Fujii Y."/>
            <person name="Ozaki K."/>
            <person name="Hirao M."/>
            <person name="Ohmori Y."/>
            <person name="Kawabata A."/>
            <person name="Hikiji T."/>
            <person name="Kobatake N."/>
            <person name="Inagaki H."/>
            <person name="Ikema Y."/>
            <person name="Okamoto S."/>
            <person name="Okitani R."/>
            <person name="Kawakami T."/>
            <person name="Noguchi S."/>
            <person name="Itoh T."/>
            <person name="Shigeta K."/>
            <person name="Senba T."/>
            <person name="Matsumura K."/>
            <person name="Nakajima Y."/>
            <person name="Mizuno T."/>
            <person name="Morinaga M."/>
            <person name="Sasaki M."/>
            <person name="Togashi T."/>
            <person name="Oyama M."/>
            <person name="Hata H."/>
            <person name="Watanabe M."/>
            <person name="Komatsu T."/>
            <person name="Mizushima-Sugano J."/>
            <person name="Satoh T."/>
            <person name="Shirai Y."/>
            <person name="Takahashi Y."/>
            <person name="Nakagawa K."/>
            <person name="Okumura K."/>
            <person name="Nagase T."/>
            <person name="Nomura N."/>
            <person name="Kikuchi H."/>
            <person name="Masuho Y."/>
            <person name="Yamashita R."/>
            <person name="Nakai K."/>
            <person name="Yada T."/>
            <person name="Nakamura Y."/>
            <person name="Ohara O."/>
            <person name="Isogai T."/>
            <person name="Sugano S."/>
        </authorList>
    </citation>
    <scope>NUCLEOTIDE SEQUENCE [LARGE SCALE MRNA] (ISOFORMS 2; 3 AND 4)</scope>
    <source>
        <tissue>Amygdala</tissue>
        <tissue>Spleen</tissue>
        <tissue>Subthalamic nucleus</tissue>
    </source>
</reference>
<reference key="4">
    <citation type="journal article" date="2006" name="Nature">
        <title>Analysis of the DNA sequence and duplication history of human chromosome 15.</title>
        <authorList>
            <person name="Zody M.C."/>
            <person name="Garber M."/>
            <person name="Sharpe T."/>
            <person name="Young S.K."/>
            <person name="Rowen L."/>
            <person name="O'Neill K."/>
            <person name="Whittaker C.A."/>
            <person name="Kamal M."/>
            <person name="Chang J.L."/>
            <person name="Cuomo C.A."/>
            <person name="Dewar K."/>
            <person name="FitzGerald M.G."/>
            <person name="Kodira C.D."/>
            <person name="Madan A."/>
            <person name="Qin S."/>
            <person name="Yang X."/>
            <person name="Abbasi N."/>
            <person name="Abouelleil A."/>
            <person name="Arachchi H.M."/>
            <person name="Baradarani L."/>
            <person name="Birditt B."/>
            <person name="Bloom S."/>
            <person name="Bloom T."/>
            <person name="Borowsky M.L."/>
            <person name="Burke J."/>
            <person name="Butler J."/>
            <person name="Cook A."/>
            <person name="DeArellano K."/>
            <person name="DeCaprio D."/>
            <person name="Dorris L. III"/>
            <person name="Dors M."/>
            <person name="Eichler E.E."/>
            <person name="Engels R."/>
            <person name="Fahey J."/>
            <person name="Fleetwood P."/>
            <person name="Friedman C."/>
            <person name="Gearin G."/>
            <person name="Hall J.L."/>
            <person name="Hensley G."/>
            <person name="Johnson E."/>
            <person name="Jones C."/>
            <person name="Kamat A."/>
            <person name="Kaur A."/>
            <person name="Locke D.P."/>
            <person name="Madan A."/>
            <person name="Munson G."/>
            <person name="Jaffe D.B."/>
            <person name="Lui A."/>
            <person name="Macdonald P."/>
            <person name="Mauceli E."/>
            <person name="Naylor J.W."/>
            <person name="Nesbitt R."/>
            <person name="Nicol R."/>
            <person name="O'Leary S.B."/>
            <person name="Ratcliffe A."/>
            <person name="Rounsley S."/>
            <person name="She X."/>
            <person name="Sneddon K.M.B."/>
            <person name="Stewart S."/>
            <person name="Sougnez C."/>
            <person name="Stone S.M."/>
            <person name="Topham K."/>
            <person name="Vincent D."/>
            <person name="Wang S."/>
            <person name="Zimmer A.R."/>
            <person name="Birren B.W."/>
            <person name="Hood L."/>
            <person name="Lander E.S."/>
            <person name="Nusbaum C."/>
        </authorList>
    </citation>
    <scope>NUCLEOTIDE SEQUENCE [LARGE SCALE GENOMIC DNA]</scope>
</reference>
<reference key="5">
    <citation type="journal article" date="2004" name="Genome Res.">
        <title>The status, quality, and expansion of the NIH full-length cDNA project: the Mammalian Gene Collection (MGC).</title>
        <authorList>
            <consortium name="The MGC Project Team"/>
        </authorList>
    </citation>
    <scope>NUCLEOTIDE SEQUENCE [LARGE SCALE MRNA] (ISOFORMS 1 AND 2)</scope>
    <source>
        <tissue>Brain</tissue>
    </source>
</reference>
<reference key="6">
    <citation type="journal article" date="2004" name="J. Biol. Chem.">
        <title>CELF6, a member of the CELF family of RNA-binding proteins, regulates muscle-specific splicing enhancer-dependent alternative splicing.</title>
        <authorList>
            <person name="Ladd A.N."/>
            <person name="Nguyen N.H."/>
            <person name="Malhotra K."/>
            <person name="Cooper T.A."/>
        </authorList>
    </citation>
    <scope>FUNCTION</scope>
    <scope>TISSUE SPECIFICITY</scope>
</reference>
<reference key="7">
    <citation type="submission" date="2006-09" db="PDB data bank">
        <title>Solution structure of the N-terminal RNA binding domain in Bruno-like 6 RNA-binding protein.</title>
        <authorList>
            <consortium name="RIKEN structural genomics initiative (RSGI)"/>
        </authorList>
    </citation>
    <scope>STRUCTURE BY NMR OF 31-132</scope>
</reference>
<feature type="chain" id="PRO_0000295229" description="CUGBP Elav-like family member 6">
    <location>
        <begin position="1"/>
        <end position="481"/>
    </location>
</feature>
<feature type="domain" description="RRM 1" evidence="2">
    <location>
        <begin position="46"/>
        <end position="127"/>
    </location>
</feature>
<feature type="domain" description="RRM 2" evidence="2">
    <location>
        <begin position="134"/>
        <end position="214"/>
    </location>
</feature>
<feature type="domain" description="RRM 3" evidence="2">
    <location>
        <begin position="396"/>
        <end position="474"/>
    </location>
</feature>
<feature type="region of interest" description="Disordered" evidence="3">
    <location>
        <begin position="1"/>
        <end position="34"/>
    </location>
</feature>
<feature type="compositionally biased region" description="Low complexity" evidence="3">
    <location>
        <begin position="1"/>
        <end position="12"/>
    </location>
</feature>
<feature type="splice variant" id="VSP_043242" description="In isoform 4." evidence="5">
    <location>
        <begin position="1"/>
        <end position="115"/>
    </location>
</feature>
<feature type="splice variant" id="VSP_026847" description="In isoform 2." evidence="5 6">
    <location>
        <begin position="1"/>
        <end position="113"/>
    </location>
</feature>
<feature type="splice variant" id="VSP_026848" description="In isoform 2." evidence="5 6">
    <original>PGMNRPIQVKPAASEGRG</original>
    <variation>MISDPPSNNSWNSVLYLL</variation>
    <location>
        <begin position="114"/>
        <end position="131"/>
    </location>
</feature>
<feature type="splice variant" id="VSP_043243" description="In isoform 4." evidence="5">
    <location>
        <position position="292"/>
    </location>
</feature>
<feature type="splice variant" id="VSP_043244" description="In isoform 4." evidence="5">
    <location>
        <begin position="344"/>
        <end position="364"/>
    </location>
</feature>
<feature type="splice variant" id="VSP_043245" description="In isoform 3." evidence="5">
    <location>
        <begin position="365"/>
        <end position="391"/>
    </location>
</feature>
<feature type="sequence variant" id="VAR_033265" description="In dbSNP:rs34566074.">
    <original>R</original>
    <variation>P</variation>
    <location>
        <position position="152"/>
    </location>
</feature>
<feature type="sequence conflict" description="In Ref. 5; AAH30835." evidence="7" ref="5">
    <original>A</original>
    <variation>T</variation>
    <location>
        <position position="2"/>
    </location>
</feature>
<feature type="sequence conflict" description="In Ref. 5; AAH30835." evidence="7" ref="5">
    <original>V</original>
    <variation>A</variation>
    <location>
        <position position="469"/>
    </location>
</feature>
<feature type="strand" evidence="8">
    <location>
        <begin position="47"/>
        <end position="50"/>
    </location>
</feature>
<feature type="helix" evidence="8">
    <location>
        <begin position="59"/>
        <end position="66"/>
    </location>
</feature>
<feature type="turn" evidence="8">
    <location>
        <begin position="67"/>
        <end position="69"/>
    </location>
</feature>
<feature type="strand" evidence="8">
    <location>
        <begin position="72"/>
        <end position="79"/>
    </location>
</feature>
<feature type="strand" evidence="8">
    <location>
        <begin position="81"/>
        <end position="83"/>
    </location>
</feature>
<feature type="strand" evidence="8">
    <location>
        <begin position="86"/>
        <end position="96"/>
    </location>
</feature>
<feature type="helix" evidence="8">
    <location>
        <begin position="97"/>
        <end position="107"/>
    </location>
</feature>
<feature type="turn" evidence="8">
    <location>
        <begin position="108"/>
        <end position="110"/>
    </location>
</feature>
<feature type="strand" evidence="8">
    <location>
        <begin position="122"/>
        <end position="124"/>
    </location>
</feature>
<gene>
    <name type="primary">CELF6</name>
    <name type="synonym">BRUNOL6</name>
</gene>
<dbReference type="EMBL" id="AF401233">
    <property type="protein sequence ID" value="AAK95615.1"/>
    <property type="molecule type" value="mRNA"/>
</dbReference>
<dbReference type="EMBL" id="AF425606">
    <property type="protein sequence ID" value="AAL34513.1"/>
    <property type="molecule type" value="mRNA"/>
</dbReference>
<dbReference type="EMBL" id="AK131098">
    <property type="protein sequence ID" value="BAC85148.1"/>
    <property type="status" value="ALT_INIT"/>
    <property type="molecule type" value="mRNA"/>
</dbReference>
<dbReference type="EMBL" id="AK294382">
    <property type="protein sequence ID" value="BAG57639.1"/>
    <property type="molecule type" value="mRNA"/>
</dbReference>
<dbReference type="EMBL" id="AK296004">
    <property type="protein sequence ID" value="BAG58778.1"/>
    <property type="molecule type" value="mRNA"/>
</dbReference>
<dbReference type="EMBL" id="AC009690">
    <property type="status" value="NOT_ANNOTATED_CDS"/>
    <property type="molecule type" value="Genomic_DNA"/>
</dbReference>
<dbReference type="EMBL" id="BC030835">
    <property type="protein sequence ID" value="AAH30835.1"/>
    <property type="molecule type" value="mRNA"/>
</dbReference>
<dbReference type="EMBL" id="BC033838">
    <property type="protein sequence ID" value="AAH33838.1"/>
    <property type="molecule type" value="mRNA"/>
</dbReference>
<dbReference type="CCDS" id="CCDS10242.1">
    <molecule id="Q96J87-1"/>
</dbReference>
<dbReference type="CCDS" id="CCDS53955.1">
    <molecule id="Q96J87-4"/>
</dbReference>
<dbReference type="CCDS" id="CCDS53956.1">
    <molecule id="Q96J87-3"/>
</dbReference>
<dbReference type="RefSeq" id="NP_001166155.1">
    <molecule id="Q96J87-3"/>
    <property type="nucleotide sequence ID" value="NM_001172684.2"/>
</dbReference>
<dbReference type="RefSeq" id="NP_001166156.1">
    <molecule id="Q96J87-4"/>
    <property type="nucleotide sequence ID" value="NM_001172685.2"/>
</dbReference>
<dbReference type="RefSeq" id="NP_443072.3">
    <molecule id="Q96J87-1"/>
    <property type="nucleotide sequence ID" value="NM_052840.4"/>
</dbReference>
<dbReference type="PDB" id="2DGQ">
    <property type="method" value="NMR"/>
    <property type="chains" value="A=38-132"/>
</dbReference>
<dbReference type="PDBsum" id="2DGQ"/>
<dbReference type="SMR" id="Q96J87"/>
<dbReference type="BioGRID" id="121952">
    <property type="interactions" value="3"/>
</dbReference>
<dbReference type="FunCoup" id="Q96J87">
    <property type="interactions" value="435"/>
</dbReference>
<dbReference type="IntAct" id="Q96J87">
    <property type="interactions" value="4"/>
</dbReference>
<dbReference type="MINT" id="Q96J87"/>
<dbReference type="STRING" id="9606.ENSP00000287202"/>
<dbReference type="iPTMnet" id="Q96J87"/>
<dbReference type="PhosphoSitePlus" id="Q96J87"/>
<dbReference type="BioMuta" id="CELF6"/>
<dbReference type="DMDM" id="74760888"/>
<dbReference type="jPOST" id="Q96J87"/>
<dbReference type="MassIVE" id="Q96J87"/>
<dbReference type="PaxDb" id="9606-ENSP00000287202"/>
<dbReference type="PeptideAtlas" id="Q96J87"/>
<dbReference type="ProteomicsDB" id="76902">
    <molecule id="Q96J87-1"/>
</dbReference>
<dbReference type="ProteomicsDB" id="76903">
    <molecule id="Q96J87-2"/>
</dbReference>
<dbReference type="ProteomicsDB" id="76904">
    <molecule id="Q96J87-3"/>
</dbReference>
<dbReference type="ProteomicsDB" id="76905">
    <molecule id="Q96J87-4"/>
</dbReference>
<dbReference type="Antibodypedia" id="26642">
    <property type="antibodies" value="138 antibodies from 25 providers"/>
</dbReference>
<dbReference type="DNASU" id="60677"/>
<dbReference type="Ensembl" id="ENST00000287202.10">
    <molecule id="Q96J87-1"/>
    <property type="protein sequence ID" value="ENSP00000287202.5"/>
    <property type="gene ID" value="ENSG00000140488.16"/>
</dbReference>
<dbReference type="Ensembl" id="ENST00000395258.7">
    <molecule id="Q96J87-2"/>
    <property type="protein sequence ID" value="ENSP00000378677.2"/>
    <property type="gene ID" value="ENSG00000140488.16"/>
</dbReference>
<dbReference type="Ensembl" id="ENST00000543764.6">
    <molecule id="Q96J87-4"/>
    <property type="protein sequence ID" value="ENSP00000439956.2"/>
    <property type="gene ID" value="ENSG00000140488.16"/>
</dbReference>
<dbReference type="Ensembl" id="ENST00000567083.2">
    <molecule id="Q96J87-3"/>
    <property type="protein sequence ID" value="ENSP00000457863.1"/>
    <property type="gene ID" value="ENSG00000140488.16"/>
</dbReference>
<dbReference type="GeneID" id="60677"/>
<dbReference type="KEGG" id="hsa:60677"/>
<dbReference type="MANE-Select" id="ENST00000287202.10">
    <property type="protein sequence ID" value="ENSP00000287202.5"/>
    <property type="RefSeq nucleotide sequence ID" value="NM_052840.5"/>
    <property type="RefSeq protein sequence ID" value="NP_443072.3"/>
</dbReference>
<dbReference type="UCSC" id="uc002auh.3">
    <molecule id="Q96J87-1"/>
    <property type="organism name" value="human"/>
</dbReference>
<dbReference type="AGR" id="HGNC:14059"/>
<dbReference type="CTD" id="60677"/>
<dbReference type="DisGeNET" id="60677"/>
<dbReference type="GeneCards" id="CELF6"/>
<dbReference type="HGNC" id="HGNC:14059">
    <property type="gene designation" value="CELF6"/>
</dbReference>
<dbReference type="HPA" id="ENSG00000140488">
    <property type="expression patterns" value="Low tissue specificity"/>
</dbReference>
<dbReference type="MIM" id="612681">
    <property type="type" value="gene"/>
</dbReference>
<dbReference type="neXtProt" id="NX_Q96J87"/>
<dbReference type="OpenTargets" id="ENSG00000140488"/>
<dbReference type="PharmGKB" id="PA25430"/>
<dbReference type="VEuPathDB" id="HostDB:ENSG00000140488"/>
<dbReference type="eggNOG" id="KOG0146">
    <property type="taxonomic scope" value="Eukaryota"/>
</dbReference>
<dbReference type="GeneTree" id="ENSGT00940000154201"/>
<dbReference type="HOGENOM" id="CLU_015367_0_1_1"/>
<dbReference type="InParanoid" id="Q96J87"/>
<dbReference type="OrthoDB" id="410044at2759"/>
<dbReference type="PAN-GO" id="Q96J87">
    <property type="GO annotations" value="6 GO annotations based on evolutionary models"/>
</dbReference>
<dbReference type="PhylomeDB" id="Q96J87"/>
<dbReference type="TreeFam" id="TF314924"/>
<dbReference type="PathwayCommons" id="Q96J87"/>
<dbReference type="SignaLink" id="Q96J87"/>
<dbReference type="SIGNOR" id="Q96J87"/>
<dbReference type="BioGRID-ORCS" id="60677">
    <property type="hits" value="18 hits in 1146 CRISPR screens"/>
</dbReference>
<dbReference type="CD-CODE" id="1A18FFC4">
    <property type="entry name" value="Paraspeckle"/>
</dbReference>
<dbReference type="CD-CODE" id="DEE660B4">
    <property type="entry name" value="Stress granule"/>
</dbReference>
<dbReference type="ChiTaRS" id="CELF6">
    <property type="organism name" value="human"/>
</dbReference>
<dbReference type="EvolutionaryTrace" id="Q96J87"/>
<dbReference type="GenomeRNAi" id="60677"/>
<dbReference type="Pharos" id="Q96J87">
    <property type="development level" value="Tbio"/>
</dbReference>
<dbReference type="PRO" id="PR:Q96J87"/>
<dbReference type="Proteomes" id="UP000005640">
    <property type="component" value="Chromosome 15"/>
</dbReference>
<dbReference type="RNAct" id="Q96J87">
    <property type="molecule type" value="protein"/>
</dbReference>
<dbReference type="Bgee" id="ENSG00000140488">
    <property type="expression patterns" value="Expressed in right uterine tube and 93 other cell types or tissues"/>
</dbReference>
<dbReference type="ExpressionAtlas" id="Q96J87">
    <property type="expression patterns" value="baseline and differential"/>
</dbReference>
<dbReference type="GO" id="GO:0005737">
    <property type="term" value="C:cytoplasm"/>
    <property type="evidence" value="ECO:0000318"/>
    <property type="project" value="GO_Central"/>
</dbReference>
<dbReference type="GO" id="GO:0005634">
    <property type="term" value="C:nucleus"/>
    <property type="evidence" value="ECO:0000318"/>
    <property type="project" value="GO_Central"/>
</dbReference>
<dbReference type="GO" id="GO:1990904">
    <property type="term" value="C:ribonucleoprotein complex"/>
    <property type="evidence" value="ECO:0000318"/>
    <property type="project" value="GO_Central"/>
</dbReference>
<dbReference type="GO" id="GO:0003729">
    <property type="term" value="F:mRNA binding"/>
    <property type="evidence" value="ECO:0000318"/>
    <property type="project" value="GO_Central"/>
</dbReference>
<dbReference type="GO" id="GO:0003723">
    <property type="term" value="F:RNA binding"/>
    <property type="evidence" value="ECO:0000303"/>
    <property type="project" value="UniProtKB"/>
</dbReference>
<dbReference type="GO" id="GO:0006376">
    <property type="term" value="P:mRNA splice site recognition"/>
    <property type="evidence" value="ECO:0000318"/>
    <property type="project" value="GO_Central"/>
</dbReference>
<dbReference type="GO" id="GO:0000381">
    <property type="term" value="P:regulation of alternative mRNA splicing, via spliceosome"/>
    <property type="evidence" value="ECO:0000314"/>
    <property type="project" value="UniProtKB"/>
</dbReference>
<dbReference type="CDD" id="cd12632">
    <property type="entry name" value="RRM1_CELF3_4_5_6"/>
    <property type="match status" value="1"/>
</dbReference>
<dbReference type="CDD" id="cd12635">
    <property type="entry name" value="RRM2_CELF3_4_5_6"/>
    <property type="match status" value="1"/>
</dbReference>
<dbReference type="CDD" id="cd12639">
    <property type="entry name" value="RRM3_CELF3_4_5_6"/>
    <property type="match status" value="1"/>
</dbReference>
<dbReference type="FunFam" id="3.30.70.330:FF:000007">
    <property type="entry name" value="CUGBP Elav-like family member 4 isoform 3"/>
    <property type="match status" value="1"/>
</dbReference>
<dbReference type="FunFam" id="3.30.70.330:FF:000010">
    <property type="entry name" value="CUGBP Elav-like family member 4 isoform 3"/>
    <property type="match status" value="1"/>
</dbReference>
<dbReference type="FunFam" id="3.30.70.330:FF:000069">
    <property type="entry name" value="CUGBP Elav-like family member 5 isoform X1"/>
    <property type="match status" value="1"/>
</dbReference>
<dbReference type="Gene3D" id="3.30.70.330">
    <property type="match status" value="3"/>
</dbReference>
<dbReference type="InterPro" id="IPR034648">
    <property type="entry name" value="CELF3/4/5/6_RRM1"/>
</dbReference>
<dbReference type="InterPro" id="IPR012677">
    <property type="entry name" value="Nucleotide-bd_a/b_plait_sf"/>
</dbReference>
<dbReference type="InterPro" id="IPR035979">
    <property type="entry name" value="RBD_domain_sf"/>
</dbReference>
<dbReference type="InterPro" id="IPR000504">
    <property type="entry name" value="RRM_dom"/>
</dbReference>
<dbReference type="PANTHER" id="PTHR24012">
    <property type="entry name" value="RNA BINDING PROTEIN"/>
    <property type="match status" value="1"/>
</dbReference>
<dbReference type="Pfam" id="PF00076">
    <property type="entry name" value="RRM_1"/>
    <property type="match status" value="3"/>
</dbReference>
<dbReference type="SMART" id="SM00360">
    <property type="entry name" value="RRM"/>
    <property type="match status" value="3"/>
</dbReference>
<dbReference type="SUPFAM" id="SSF54928">
    <property type="entry name" value="RNA-binding domain, RBD"/>
    <property type="match status" value="2"/>
</dbReference>
<dbReference type="PROSITE" id="PS50102">
    <property type="entry name" value="RRM"/>
    <property type="match status" value="3"/>
</dbReference>
<proteinExistence type="evidence at protein level"/>
<sequence length="481" mass="50477">MAAAPGGSAQPAGPGPRLGFSTADSGVGMSGLNPGPAVPMKDHDAIKLFVGQIPRGLDEQDLKPLFEEFGRIYELTVLKDRLTGLHKGCAFLTYCARDSALKAQSALHEQKTLPGMNRPIQVKPAASEGRGEDRKLFVGMLGKQQGEEDVRRLFQPFGHIEECTVLRSPDGTSKGCAFVKFGSQGEAQAAIRGLHGSRTMAGASSSLVVKLADTDRERALRRMQQMAGHLGAFHPAPLPLGACGAYTTAILQHQAALLAAAQGPGLGPVAAVAAQMQHVAAFSLVAAPLLPAAAANSPPGSGPGTLPGLPAPIGVNGFGPLTPQTNGQPGSDTLYNNGLSPYPAQSPGVADPLQQAYAGMHHYAAAYPSAYAPVSTAFPQQPSALPQQQREGPEGCNLFIYHLPQEFGDAELIQTFLPFGAVVSAKVFVDRATNQSKCFGFVSFDNPTSAQTAIQAMNGFQIGMKRLKVQLKRPKDANRPY</sequence>
<protein>
    <recommendedName>
        <fullName>CUGBP Elav-like family member 6</fullName>
        <shortName>CELF-6</shortName>
    </recommendedName>
    <alternativeName>
        <fullName>Bruno-like protein 6</fullName>
    </alternativeName>
    <alternativeName>
        <fullName>CUG-BP- and ETR-3-like factor 6</fullName>
    </alternativeName>
    <alternativeName>
        <fullName>RNA-binding protein BRUNOL-6</fullName>
    </alternativeName>
</protein>
<name>CELF6_HUMAN</name>
<organism>
    <name type="scientific">Homo sapiens</name>
    <name type="common">Human</name>
    <dbReference type="NCBI Taxonomy" id="9606"/>
    <lineage>
        <taxon>Eukaryota</taxon>
        <taxon>Metazoa</taxon>
        <taxon>Chordata</taxon>
        <taxon>Craniata</taxon>
        <taxon>Vertebrata</taxon>
        <taxon>Euteleostomi</taxon>
        <taxon>Mammalia</taxon>
        <taxon>Eutheria</taxon>
        <taxon>Euarchontoglires</taxon>
        <taxon>Primates</taxon>
        <taxon>Haplorrhini</taxon>
        <taxon>Catarrhini</taxon>
        <taxon>Hominidae</taxon>
        <taxon>Homo</taxon>
    </lineage>
</organism>
<comment type="function">
    <text evidence="4">RNA-binding protein implicated in the regulation of pre-mRNA alternative splicing. Mediates exon inclusion and/or exclusion in pre-mRNA that are subject to tissue-specific and developmentally regulated alternative splicing. Specifically activates exon 5 inclusion of TNNT2 in a muscle-specific splicing enhancer (MSE)-dependent manner. Promotes also exon exclusion of INSR pre-mRNA.</text>
</comment>
<comment type="interaction">
    <interactant intactId="EBI-12832044">
        <id>Q96J87-2</id>
    </interactant>
    <interactant intactId="EBI-7043337">
        <id>P05813</id>
        <label>CRYBA1</label>
    </interactant>
    <organismsDiffer>false</organismsDiffer>
    <experiments>3</experiments>
</comment>
<comment type="interaction">
    <interactant intactId="EBI-12832044">
        <id>Q96J87-2</id>
    </interactant>
    <interactant intactId="EBI-724310">
        <id>Q15038</id>
        <label>DAZAP2</label>
    </interactant>
    <organismsDiffer>false</organismsDiffer>
    <experiments>3</experiments>
</comment>
<comment type="subcellular location">
    <subcellularLocation>
        <location evidence="1">Nucleus</location>
    </subcellularLocation>
    <subcellularLocation>
        <location evidence="1">Cytoplasm</location>
    </subcellularLocation>
</comment>
<comment type="alternative products">
    <event type="alternative splicing"/>
    <isoform>
        <id>Q96J87-1</id>
        <name>1</name>
        <sequence type="displayed"/>
    </isoform>
    <isoform>
        <id>Q96J87-2</id>
        <name>2</name>
        <sequence type="described" ref="VSP_026847 VSP_026848"/>
    </isoform>
    <isoform>
        <id>Q96J87-3</id>
        <name>3</name>
        <sequence type="described" ref="VSP_043245"/>
    </isoform>
    <isoform>
        <id>Q96J87-4</id>
        <name>4</name>
        <sequence type="described" ref="VSP_043242 VSP_043243 VSP_043244"/>
    </isoform>
</comment>
<comment type="tissue specificity">
    <text evidence="4">Expressed mainly in kidney, brain and testis and present in other tissues albeit at lower levels. Also expressed in fetal kidney.</text>
</comment>
<comment type="similarity">
    <text evidence="7">Belongs to the CELF/BRUNOL family.</text>
</comment>
<comment type="sequence caution" evidence="7">
    <conflict type="erroneous initiation">
        <sequence resource="EMBL-CDS" id="BAC85148"/>
    </conflict>
</comment>